<dbReference type="EC" id="3.1.2.12"/>
<dbReference type="EMBL" id="CP000970">
    <property type="protein sequence ID" value="ACB18797.1"/>
    <property type="molecule type" value="Genomic_DNA"/>
</dbReference>
<dbReference type="RefSeq" id="WP_000421369.1">
    <property type="nucleotide sequence ID" value="NC_010498.1"/>
</dbReference>
<dbReference type="SMR" id="B1LKQ1"/>
<dbReference type="ESTHER" id="ecoli-yeiG">
    <property type="family name" value="A85-EsteraseD-FGH"/>
</dbReference>
<dbReference type="MEROPS" id="S09.A39"/>
<dbReference type="KEGG" id="ecm:EcSMS35_2301"/>
<dbReference type="HOGENOM" id="CLU_056472_0_0_6"/>
<dbReference type="Proteomes" id="UP000007011">
    <property type="component" value="Chromosome"/>
</dbReference>
<dbReference type="GO" id="GO:0005829">
    <property type="term" value="C:cytosol"/>
    <property type="evidence" value="ECO:0007669"/>
    <property type="project" value="TreeGrafter"/>
</dbReference>
<dbReference type="GO" id="GO:0052689">
    <property type="term" value="F:carboxylic ester hydrolase activity"/>
    <property type="evidence" value="ECO:0007669"/>
    <property type="project" value="UniProtKB-KW"/>
</dbReference>
<dbReference type="GO" id="GO:0018738">
    <property type="term" value="F:S-formylglutathione hydrolase activity"/>
    <property type="evidence" value="ECO:0007669"/>
    <property type="project" value="UniProtKB-EC"/>
</dbReference>
<dbReference type="GO" id="GO:0046294">
    <property type="term" value="P:formaldehyde catabolic process"/>
    <property type="evidence" value="ECO:0007669"/>
    <property type="project" value="InterPro"/>
</dbReference>
<dbReference type="FunFam" id="3.40.50.1820:FF:000002">
    <property type="entry name" value="S-formylglutathione hydrolase"/>
    <property type="match status" value="1"/>
</dbReference>
<dbReference type="Gene3D" id="3.40.50.1820">
    <property type="entry name" value="alpha/beta hydrolase"/>
    <property type="match status" value="1"/>
</dbReference>
<dbReference type="InterPro" id="IPR029058">
    <property type="entry name" value="AB_hydrolase_fold"/>
</dbReference>
<dbReference type="InterPro" id="IPR000801">
    <property type="entry name" value="Esterase-like"/>
</dbReference>
<dbReference type="InterPro" id="IPR014186">
    <property type="entry name" value="S-formylglutathione_hydrol"/>
</dbReference>
<dbReference type="NCBIfam" id="TIGR02821">
    <property type="entry name" value="fghA_ester_D"/>
    <property type="match status" value="1"/>
</dbReference>
<dbReference type="PANTHER" id="PTHR10061">
    <property type="entry name" value="S-FORMYLGLUTATHIONE HYDROLASE"/>
    <property type="match status" value="1"/>
</dbReference>
<dbReference type="PANTHER" id="PTHR10061:SF1">
    <property type="entry name" value="S-FORMYLGLUTATHIONE HYDROLASE YEIG"/>
    <property type="match status" value="1"/>
</dbReference>
<dbReference type="Pfam" id="PF00756">
    <property type="entry name" value="Esterase"/>
    <property type="match status" value="1"/>
</dbReference>
<dbReference type="SUPFAM" id="SSF53474">
    <property type="entry name" value="alpha/beta-Hydrolases"/>
    <property type="match status" value="1"/>
</dbReference>
<comment type="function">
    <text evidence="1">Serine hydrolase involved in the detoxification of formaldehyde. Hydrolyzes S-formylglutathione to glutathione and formate (By similarity).</text>
</comment>
<comment type="catalytic activity">
    <reaction>
        <text>S-formylglutathione + H2O = formate + glutathione + H(+)</text>
        <dbReference type="Rhea" id="RHEA:14961"/>
        <dbReference type="ChEBI" id="CHEBI:15377"/>
        <dbReference type="ChEBI" id="CHEBI:15378"/>
        <dbReference type="ChEBI" id="CHEBI:15740"/>
        <dbReference type="ChEBI" id="CHEBI:57688"/>
        <dbReference type="ChEBI" id="CHEBI:57925"/>
        <dbReference type="EC" id="3.1.2.12"/>
    </reaction>
</comment>
<comment type="similarity">
    <text evidence="2">Belongs to the esterase D family.</text>
</comment>
<keyword id="KW-0378">Hydrolase</keyword>
<keyword id="KW-0719">Serine esterase</keyword>
<proteinExistence type="inferred from homology"/>
<gene>
    <name type="primary">yeiG</name>
    <name type="ordered locus">EcSMS35_2301</name>
</gene>
<feature type="chain" id="PRO_0000341667" description="S-formylglutathione hydrolase YeiG">
    <location>
        <begin position="1"/>
        <end position="278"/>
    </location>
</feature>
<feature type="active site" description="Charge relay system" evidence="1">
    <location>
        <position position="145"/>
    </location>
</feature>
<feature type="active site" description="Charge relay system" evidence="1">
    <location>
        <position position="223"/>
    </location>
</feature>
<feature type="active site" description="Charge relay system" evidence="1">
    <location>
        <position position="256"/>
    </location>
</feature>
<protein>
    <recommendedName>
        <fullName>S-formylglutathione hydrolase YeiG</fullName>
        <shortName>FGH</shortName>
        <ecNumber>3.1.2.12</ecNumber>
    </recommendedName>
</protein>
<reference key="1">
    <citation type="journal article" date="2008" name="J. Bacteriol.">
        <title>Insights into the environmental resistance gene pool from the genome sequence of the multidrug-resistant environmental isolate Escherichia coli SMS-3-5.</title>
        <authorList>
            <person name="Fricke W.F."/>
            <person name="Wright M.S."/>
            <person name="Lindell A.H."/>
            <person name="Harkins D.M."/>
            <person name="Baker-Austin C."/>
            <person name="Ravel J."/>
            <person name="Stepanauskas R."/>
        </authorList>
    </citation>
    <scope>NUCLEOTIDE SEQUENCE [LARGE SCALE GENOMIC DNA]</scope>
    <source>
        <strain>SMS-3-5 / SECEC</strain>
    </source>
</reference>
<organism>
    <name type="scientific">Escherichia coli (strain SMS-3-5 / SECEC)</name>
    <dbReference type="NCBI Taxonomy" id="439855"/>
    <lineage>
        <taxon>Bacteria</taxon>
        <taxon>Pseudomonadati</taxon>
        <taxon>Pseudomonadota</taxon>
        <taxon>Gammaproteobacteria</taxon>
        <taxon>Enterobacterales</taxon>
        <taxon>Enterobacteriaceae</taxon>
        <taxon>Escherichia</taxon>
    </lineage>
</organism>
<name>SFGH2_ECOSM</name>
<accession>B1LKQ1</accession>
<evidence type="ECO:0000250" key="1"/>
<evidence type="ECO:0000305" key="2"/>
<sequence length="278" mass="31281">MELLEEHLCFEGWQQRWRHDSSTLNCPMTFSIFLPPPRDHTPPPVLYWLSGLTCNDENFTTKAGAQRVAAELGIVLVMPDTSPRGEQVANDDGYDLGQGAGFYLNATQPPWATHYRMYDYLRDELPALVQSQFNVSDRCAISGHSMGGHGALIMALKNPGKYTSVSAFAPIVNPCSIPWGIKAFSRYLGEDKNAWLEWDSCALMYASNAQDAIPTLIDQGDNDQFLADQLQPAVLAEAARQKAWPMTLRIQPGYDHSYYFIASFIEDHLRFHAQYLLK</sequence>